<sequence>MGIKVYKPTTNGRRNMTSLDFAEITTSTPEKSLLVSLKSKAGRNNNGRITVRHQGGGHKRHYRLIDFKRNKDGVEAVVKTIEYDPNRTANIALVHYTDGVKAYIIAPKGLEVGQRIVSGPDADIKVGNALPLANIPVGTVVHNIELKPGKGGELVRAAGASAQVLGQEGKYVLVRLQSGEVRMILGTCRATIGTVGNEQQSLVNIGKAGRSRWKGVRPTVRGSVMNPNDHPHGGGEGKAPVGRKAPSTPWGKPALGLKTRNKKAKSDKLIVRRRNEK</sequence>
<reference key="1">
    <citation type="journal article" date="2006" name="Proc. Natl. Acad. Sci. U.S.A.">
        <title>Molecular genetic anatomy of inter- and intraserotype variation in the human bacterial pathogen group A Streptococcus.</title>
        <authorList>
            <person name="Beres S.B."/>
            <person name="Richter E.W."/>
            <person name="Nagiec M.J."/>
            <person name="Sumby P."/>
            <person name="Porcella S.F."/>
            <person name="DeLeo F.R."/>
            <person name="Musser J.M."/>
        </authorList>
    </citation>
    <scope>NUCLEOTIDE SEQUENCE [LARGE SCALE GENOMIC DNA]</scope>
    <source>
        <strain>MGAS10750</strain>
    </source>
</reference>
<protein>
    <recommendedName>
        <fullName evidence="1">Large ribosomal subunit protein uL2</fullName>
    </recommendedName>
    <alternativeName>
        <fullName evidence="3">50S ribosomal protein L2</fullName>
    </alternativeName>
</protein>
<feature type="chain" id="PRO_0000310024" description="Large ribosomal subunit protein uL2">
    <location>
        <begin position="1"/>
        <end position="277"/>
    </location>
</feature>
<feature type="region of interest" description="Disordered" evidence="2">
    <location>
        <begin position="218"/>
        <end position="277"/>
    </location>
</feature>
<feature type="compositionally biased region" description="Basic and acidic residues" evidence="2">
    <location>
        <begin position="264"/>
        <end position="277"/>
    </location>
</feature>
<accession>Q1J911</accession>
<gene>
    <name evidence="1" type="primary">rplB</name>
    <name type="ordered locus">MGAS10750_Spy0050</name>
</gene>
<comment type="function">
    <text evidence="1">One of the primary rRNA binding proteins. Required for association of the 30S and 50S subunits to form the 70S ribosome, for tRNA binding and peptide bond formation. It has been suggested to have peptidyltransferase activity; this is somewhat controversial. Makes several contacts with the 16S rRNA in the 70S ribosome.</text>
</comment>
<comment type="subunit">
    <text evidence="1">Part of the 50S ribosomal subunit. Forms a bridge to the 30S subunit in the 70S ribosome.</text>
</comment>
<comment type="similarity">
    <text evidence="1">Belongs to the universal ribosomal protein uL2 family.</text>
</comment>
<proteinExistence type="inferred from homology"/>
<organism>
    <name type="scientific">Streptococcus pyogenes serotype M4 (strain MGAS10750)</name>
    <dbReference type="NCBI Taxonomy" id="370554"/>
    <lineage>
        <taxon>Bacteria</taxon>
        <taxon>Bacillati</taxon>
        <taxon>Bacillota</taxon>
        <taxon>Bacilli</taxon>
        <taxon>Lactobacillales</taxon>
        <taxon>Streptococcaceae</taxon>
        <taxon>Streptococcus</taxon>
    </lineage>
</organism>
<keyword id="KW-0687">Ribonucleoprotein</keyword>
<keyword id="KW-0689">Ribosomal protein</keyword>
<keyword id="KW-0694">RNA-binding</keyword>
<keyword id="KW-0699">rRNA-binding</keyword>
<name>RL2_STRPF</name>
<evidence type="ECO:0000255" key="1">
    <source>
        <dbReference type="HAMAP-Rule" id="MF_01320"/>
    </source>
</evidence>
<evidence type="ECO:0000256" key="2">
    <source>
        <dbReference type="SAM" id="MobiDB-lite"/>
    </source>
</evidence>
<evidence type="ECO:0000305" key="3"/>
<dbReference type="EMBL" id="CP000262">
    <property type="protein sequence ID" value="ABF37000.1"/>
    <property type="molecule type" value="Genomic_DNA"/>
</dbReference>
<dbReference type="SMR" id="Q1J911"/>
<dbReference type="KEGG" id="spi:MGAS10750_Spy0050"/>
<dbReference type="HOGENOM" id="CLU_036235_2_1_9"/>
<dbReference type="Proteomes" id="UP000002434">
    <property type="component" value="Chromosome"/>
</dbReference>
<dbReference type="GO" id="GO:0015934">
    <property type="term" value="C:large ribosomal subunit"/>
    <property type="evidence" value="ECO:0007669"/>
    <property type="project" value="InterPro"/>
</dbReference>
<dbReference type="GO" id="GO:0019843">
    <property type="term" value="F:rRNA binding"/>
    <property type="evidence" value="ECO:0007669"/>
    <property type="project" value="UniProtKB-UniRule"/>
</dbReference>
<dbReference type="GO" id="GO:0003735">
    <property type="term" value="F:structural constituent of ribosome"/>
    <property type="evidence" value="ECO:0007669"/>
    <property type="project" value="InterPro"/>
</dbReference>
<dbReference type="GO" id="GO:0016740">
    <property type="term" value="F:transferase activity"/>
    <property type="evidence" value="ECO:0007669"/>
    <property type="project" value="InterPro"/>
</dbReference>
<dbReference type="GO" id="GO:0002181">
    <property type="term" value="P:cytoplasmic translation"/>
    <property type="evidence" value="ECO:0007669"/>
    <property type="project" value="TreeGrafter"/>
</dbReference>
<dbReference type="FunFam" id="2.30.30.30:FF:000001">
    <property type="entry name" value="50S ribosomal protein L2"/>
    <property type="match status" value="1"/>
</dbReference>
<dbReference type="FunFam" id="2.40.50.140:FF:000003">
    <property type="entry name" value="50S ribosomal protein L2"/>
    <property type="match status" value="1"/>
</dbReference>
<dbReference type="FunFam" id="4.10.950.10:FF:000001">
    <property type="entry name" value="50S ribosomal protein L2"/>
    <property type="match status" value="1"/>
</dbReference>
<dbReference type="Gene3D" id="2.30.30.30">
    <property type="match status" value="1"/>
</dbReference>
<dbReference type="Gene3D" id="2.40.50.140">
    <property type="entry name" value="Nucleic acid-binding proteins"/>
    <property type="match status" value="1"/>
</dbReference>
<dbReference type="Gene3D" id="4.10.950.10">
    <property type="entry name" value="Ribosomal protein L2, domain 3"/>
    <property type="match status" value="1"/>
</dbReference>
<dbReference type="HAMAP" id="MF_01320_B">
    <property type="entry name" value="Ribosomal_uL2_B"/>
    <property type="match status" value="1"/>
</dbReference>
<dbReference type="InterPro" id="IPR012340">
    <property type="entry name" value="NA-bd_OB-fold"/>
</dbReference>
<dbReference type="InterPro" id="IPR014722">
    <property type="entry name" value="Rib_uL2_dom2"/>
</dbReference>
<dbReference type="InterPro" id="IPR002171">
    <property type="entry name" value="Ribosomal_uL2"/>
</dbReference>
<dbReference type="InterPro" id="IPR005880">
    <property type="entry name" value="Ribosomal_uL2_bac/org-type"/>
</dbReference>
<dbReference type="InterPro" id="IPR022669">
    <property type="entry name" value="Ribosomal_uL2_C"/>
</dbReference>
<dbReference type="InterPro" id="IPR022671">
    <property type="entry name" value="Ribosomal_uL2_CS"/>
</dbReference>
<dbReference type="InterPro" id="IPR014726">
    <property type="entry name" value="Ribosomal_uL2_dom3"/>
</dbReference>
<dbReference type="InterPro" id="IPR022666">
    <property type="entry name" value="Ribosomal_uL2_RNA-bd_dom"/>
</dbReference>
<dbReference type="InterPro" id="IPR008991">
    <property type="entry name" value="Translation_prot_SH3-like_sf"/>
</dbReference>
<dbReference type="NCBIfam" id="TIGR01171">
    <property type="entry name" value="rplB_bact"/>
    <property type="match status" value="1"/>
</dbReference>
<dbReference type="PANTHER" id="PTHR13691:SF5">
    <property type="entry name" value="LARGE RIBOSOMAL SUBUNIT PROTEIN UL2M"/>
    <property type="match status" value="1"/>
</dbReference>
<dbReference type="PANTHER" id="PTHR13691">
    <property type="entry name" value="RIBOSOMAL PROTEIN L2"/>
    <property type="match status" value="1"/>
</dbReference>
<dbReference type="Pfam" id="PF00181">
    <property type="entry name" value="Ribosomal_L2"/>
    <property type="match status" value="1"/>
</dbReference>
<dbReference type="Pfam" id="PF03947">
    <property type="entry name" value="Ribosomal_L2_C"/>
    <property type="match status" value="1"/>
</dbReference>
<dbReference type="PIRSF" id="PIRSF002158">
    <property type="entry name" value="Ribosomal_L2"/>
    <property type="match status" value="1"/>
</dbReference>
<dbReference type="SMART" id="SM01383">
    <property type="entry name" value="Ribosomal_L2"/>
    <property type="match status" value="1"/>
</dbReference>
<dbReference type="SMART" id="SM01382">
    <property type="entry name" value="Ribosomal_L2_C"/>
    <property type="match status" value="1"/>
</dbReference>
<dbReference type="SUPFAM" id="SSF50249">
    <property type="entry name" value="Nucleic acid-binding proteins"/>
    <property type="match status" value="1"/>
</dbReference>
<dbReference type="SUPFAM" id="SSF50104">
    <property type="entry name" value="Translation proteins SH3-like domain"/>
    <property type="match status" value="1"/>
</dbReference>
<dbReference type="PROSITE" id="PS00467">
    <property type="entry name" value="RIBOSOMAL_L2"/>
    <property type="match status" value="1"/>
</dbReference>